<feature type="chain" id="PRO_1000120216" description="GMP synthase [glutamine-hydrolyzing]">
    <location>
        <begin position="1"/>
        <end position="512"/>
    </location>
</feature>
<feature type="domain" description="Glutamine amidotransferase type-1" evidence="1">
    <location>
        <begin position="7"/>
        <end position="197"/>
    </location>
</feature>
<feature type="domain" description="GMPS ATP-PPase" evidence="1">
    <location>
        <begin position="198"/>
        <end position="387"/>
    </location>
</feature>
<feature type="active site" description="Nucleophile" evidence="1">
    <location>
        <position position="84"/>
    </location>
</feature>
<feature type="active site" evidence="1">
    <location>
        <position position="171"/>
    </location>
</feature>
<feature type="active site" evidence="1">
    <location>
        <position position="173"/>
    </location>
</feature>
<feature type="binding site" evidence="1">
    <location>
        <begin position="225"/>
        <end position="231"/>
    </location>
    <ligand>
        <name>ATP</name>
        <dbReference type="ChEBI" id="CHEBI:30616"/>
    </ligand>
</feature>
<comment type="function">
    <text evidence="1">Catalyzes the synthesis of GMP from XMP.</text>
</comment>
<comment type="catalytic activity">
    <reaction evidence="1">
        <text>XMP + L-glutamine + ATP + H2O = GMP + L-glutamate + AMP + diphosphate + 2 H(+)</text>
        <dbReference type="Rhea" id="RHEA:11680"/>
        <dbReference type="ChEBI" id="CHEBI:15377"/>
        <dbReference type="ChEBI" id="CHEBI:15378"/>
        <dbReference type="ChEBI" id="CHEBI:29985"/>
        <dbReference type="ChEBI" id="CHEBI:30616"/>
        <dbReference type="ChEBI" id="CHEBI:33019"/>
        <dbReference type="ChEBI" id="CHEBI:57464"/>
        <dbReference type="ChEBI" id="CHEBI:58115"/>
        <dbReference type="ChEBI" id="CHEBI:58359"/>
        <dbReference type="ChEBI" id="CHEBI:456215"/>
        <dbReference type="EC" id="6.3.5.2"/>
    </reaction>
</comment>
<comment type="pathway">
    <text evidence="1">Purine metabolism; GMP biosynthesis; GMP from XMP (L-Gln route): step 1/1.</text>
</comment>
<comment type="subunit">
    <text evidence="1">Homodimer.</text>
</comment>
<organism>
    <name type="scientific">Bacillus cytotoxicus (strain DSM 22905 / CIP 110041 / 391-98 / NVH 391-98)</name>
    <dbReference type="NCBI Taxonomy" id="315749"/>
    <lineage>
        <taxon>Bacteria</taxon>
        <taxon>Bacillati</taxon>
        <taxon>Bacillota</taxon>
        <taxon>Bacilli</taxon>
        <taxon>Bacillales</taxon>
        <taxon>Bacillaceae</taxon>
        <taxon>Bacillus</taxon>
        <taxon>Bacillus cereus group</taxon>
    </lineage>
</organism>
<proteinExistence type="inferred from homology"/>
<protein>
    <recommendedName>
        <fullName evidence="1">GMP synthase [glutamine-hydrolyzing]</fullName>
        <ecNumber evidence="1">6.3.5.2</ecNumber>
    </recommendedName>
    <alternativeName>
        <fullName evidence="1">GMP synthetase</fullName>
    </alternativeName>
    <alternativeName>
        <fullName evidence="1">Glutamine amidotransferase</fullName>
    </alternativeName>
</protein>
<dbReference type="EC" id="6.3.5.2" evidence="1"/>
<dbReference type="EMBL" id="CP000764">
    <property type="protein sequence ID" value="ABS20619.1"/>
    <property type="molecule type" value="Genomic_DNA"/>
</dbReference>
<dbReference type="SMR" id="A7GKG1"/>
<dbReference type="STRING" id="315749.Bcer98_0253"/>
<dbReference type="KEGG" id="bcy:Bcer98_0253"/>
<dbReference type="eggNOG" id="COG0518">
    <property type="taxonomic scope" value="Bacteria"/>
</dbReference>
<dbReference type="eggNOG" id="COG0519">
    <property type="taxonomic scope" value="Bacteria"/>
</dbReference>
<dbReference type="HOGENOM" id="CLU_014340_0_5_9"/>
<dbReference type="OrthoDB" id="9802219at2"/>
<dbReference type="UniPathway" id="UPA00189">
    <property type="reaction ID" value="UER00296"/>
</dbReference>
<dbReference type="Proteomes" id="UP000002300">
    <property type="component" value="Chromosome"/>
</dbReference>
<dbReference type="GO" id="GO:0005829">
    <property type="term" value="C:cytosol"/>
    <property type="evidence" value="ECO:0007669"/>
    <property type="project" value="TreeGrafter"/>
</dbReference>
<dbReference type="GO" id="GO:0005524">
    <property type="term" value="F:ATP binding"/>
    <property type="evidence" value="ECO:0007669"/>
    <property type="project" value="UniProtKB-UniRule"/>
</dbReference>
<dbReference type="GO" id="GO:0003921">
    <property type="term" value="F:GMP synthase activity"/>
    <property type="evidence" value="ECO:0007669"/>
    <property type="project" value="InterPro"/>
</dbReference>
<dbReference type="CDD" id="cd01742">
    <property type="entry name" value="GATase1_GMP_Synthase"/>
    <property type="match status" value="1"/>
</dbReference>
<dbReference type="CDD" id="cd01997">
    <property type="entry name" value="GMP_synthase_C"/>
    <property type="match status" value="1"/>
</dbReference>
<dbReference type="FunFam" id="3.30.300.10:FF:000002">
    <property type="entry name" value="GMP synthase [glutamine-hydrolyzing]"/>
    <property type="match status" value="1"/>
</dbReference>
<dbReference type="FunFam" id="3.40.50.620:FF:000001">
    <property type="entry name" value="GMP synthase [glutamine-hydrolyzing]"/>
    <property type="match status" value="1"/>
</dbReference>
<dbReference type="FunFam" id="3.40.50.880:FF:000001">
    <property type="entry name" value="GMP synthase [glutamine-hydrolyzing]"/>
    <property type="match status" value="1"/>
</dbReference>
<dbReference type="Gene3D" id="3.30.300.10">
    <property type="match status" value="1"/>
</dbReference>
<dbReference type="Gene3D" id="3.40.50.880">
    <property type="match status" value="1"/>
</dbReference>
<dbReference type="Gene3D" id="3.40.50.620">
    <property type="entry name" value="HUPs"/>
    <property type="match status" value="1"/>
</dbReference>
<dbReference type="HAMAP" id="MF_00344">
    <property type="entry name" value="GMP_synthase"/>
    <property type="match status" value="1"/>
</dbReference>
<dbReference type="InterPro" id="IPR029062">
    <property type="entry name" value="Class_I_gatase-like"/>
</dbReference>
<dbReference type="InterPro" id="IPR017926">
    <property type="entry name" value="GATASE"/>
</dbReference>
<dbReference type="InterPro" id="IPR001674">
    <property type="entry name" value="GMP_synth_C"/>
</dbReference>
<dbReference type="InterPro" id="IPR004739">
    <property type="entry name" value="GMP_synth_GATase"/>
</dbReference>
<dbReference type="InterPro" id="IPR022955">
    <property type="entry name" value="GMP_synthase"/>
</dbReference>
<dbReference type="InterPro" id="IPR025777">
    <property type="entry name" value="GMPS_ATP_PPase_dom"/>
</dbReference>
<dbReference type="InterPro" id="IPR022310">
    <property type="entry name" value="NAD/GMP_synthase"/>
</dbReference>
<dbReference type="InterPro" id="IPR014729">
    <property type="entry name" value="Rossmann-like_a/b/a_fold"/>
</dbReference>
<dbReference type="NCBIfam" id="TIGR00884">
    <property type="entry name" value="guaA_Cterm"/>
    <property type="match status" value="1"/>
</dbReference>
<dbReference type="NCBIfam" id="TIGR00888">
    <property type="entry name" value="guaA_Nterm"/>
    <property type="match status" value="1"/>
</dbReference>
<dbReference type="NCBIfam" id="NF000848">
    <property type="entry name" value="PRK00074.1"/>
    <property type="match status" value="1"/>
</dbReference>
<dbReference type="PANTHER" id="PTHR11922:SF2">
    <property type="entry name" value="GMP SYNTHASE [GLUTAMINE-HYDROLYZING]"/>
    <property type="match status" value="1"/>
</dbReference>
<dbReference type="PANTHER" id="PTHR11922">
    <property type="entry name" value="GMP SYNTHASE-RELATED"/>
    <property type="match status" value="1"/>
</dbReference>
<dbReference type="Pfam" id="PF00117">
    <property type="entry name" value="GATase"/>
    <property type="match status" value="1"/>
</dbReference>
<dbReference type="Pfam" id="PF00958">
    <property type="entry name" value="GMP_synt_C"/>
    <property type="match status" value="1"/>
</dbReference>
<dbReference type="Pfam" id="PF02540">
    <property type="entry name" value="NAD_synthase"/>
    <property type="match status" value="1"/>
</dbReference>
<dbReference type="PRINTS" id="PR00097">
    <property type="entry name" value="ANTSNTHASEII"/>
</dbReference>
<dbReference type="PRINTS" id="PR00099">
    <property type="entry name" value="CPSGATASE"/>
</dbReference>
<dbReference type="PRINTS" id="PR00096">
    <property type="entry name" value="GATASE"/>
</dbReference>
<dbReference type="SUPFAM" id="SSF52402">
    <property type="entry name" value="Adenine nucleotide alpha hydrolases-like"/>
    <property type="match status" value="1"/>
</dbReference>
<dbReference type="SUPFAM" id="SSF52317">
    <property type="entry name" value="Class I glutamine amidotransferase-like"/>
    <property type="match status" value="1"/>
</dbReference>
<dbReference type="SUPFAM" id="SSF54810">
    <property type="entry name" value="GMP synthetase C-terminal dimerisation domain"/>
    <property type="match status" value="1"/>
</dbReference>
<dbReference type="PROSITE" id="PS51273">
    <property type="entry name" value="GATASE_TYPE_1"/>
    <property type="match status" value="1"/>
</dbReference>
<dbReference type="PROSITE" id="PS51553">
    <property type="entry name" value="GMPS_ATP_PPASE"/>
    <property type="match status" value="1"/>
</dbReference>
<evidence type="ECO:0000255" key="1">
    <source>
        <dbReference type="HAMAP-Rule" id="MF_00344"/>
    </source>
</evidence>
<reference key="1">
    <citation type="journal article" date="2008" name="Chem. Biol. Interact.">
        <title>Extending the Bacillus cereus group genomics to putative food-borne pathogens of different toxicity.</title>
        <authorList>
            <person name="Lapidus A."/>
            <person name="Goltsman E."/>
            <person name="Auger S."/>
            <person name="Galleron N."/>
            <person name="Segurens B."/>
            <person name="Dossat C."/>
            <person name="Land M.L."/>
            <person name="Broussolle V."/>
            <person name="Brillard J."/>
            <person name="Guinebretiere M.-H."/>
            <person name="Sanchis V."/>
            <person name="Nguen-the C."/>
            <person name="Lereclus D."/>
            <person name="Richardson P."/>
            <person name="Wincker P."/>
            <person name="Weissenbach J."/>
            <person name="Ehrlich S.D."/>
            <person name="Sorokin A."/>
        </authorList>
    </citation>
    <scope>NUCLEOTIDE SEQUENCE [LARGE SCALE GENOMIC DNA]</scope>
    <source>
        <strain>DSM 22905 / CIP 110041 / 391-98 / NVH 391-98</strain>
    </source>
</reference>
<sequence>MKKQHDTIIVLDFGSQYNQLIARRIREFGVYSELHPHTITAEEIKAMNPKGIIFSGGPNSVYGENAFHCDEKIFELGLPIFGICYGMQLMTKHFGGKVERANHREYGKAVLKVENESKLYTNLPEEQVVWMSHGDLVTGLPEGFVVDATSESCPIAGMSNEEKQLYGVQFHPEVRHSEHGNDLIKNFVFGVCGCSEGWNMENFIEVELEKIRETVGDKKVLCALSGGVDSSVVAVLIHKAIGDQLTCIFVDHGLLRKGEAEGVMKTFSEGFHMNVIKIDARERFMKKLKGVEDPEQKRKIIGNEFIYVFDDEAAKLEGIDFLAQGTLYTDIIESGTATAQTIKSHHNVGGLPEDMQFKLIEPLNTLFKDEVRVLGSELGIPDEIVWRQPFPGPGLGIRVLGEITEEKLEIVRESDAILREEIQKAGLDREIWQYFTALPGMRSVGVMGDERTYDYTVGIRAVTSIDGMTADWARIPWDVLEKISVRIVNEVKHVNRVVYDITSKPPATIEWE</sequence>
<name>GUAA_BACCN</name>
<accession>A7GKG1</accession>
<gene>
    <name evidence="1" type="primary">guaA</name>
    <name type="ordered locus">Bcer98_0253</name>
</gene>
<keyword id="KW-0067">ATP-binding</keyword>
<keyword id="KW-0315">Glutamine amidotransferase</keyword>
<keyword id="KW-0332">GMP biosynthesis</keyword>
<keyword id="KW-0436">Ligase</keyword>
<keyword id="KW-0547">Nucleotide-binding</keyword>
<keyword id="KW-0658">Purine biosynthesis</keyword>